<reference key="1">
    <citation type="journal article" date="2004" name="Proc. Natl. Acad. Sci. U.S.A.">
        <title>Genome sequence of the deep-sea gamma-proteobacterium Idiomarina loihiensis reveals amino acid fermentation as a source of carbon and energy.</title>
        <authorList>
            <person name="Hou S."/>
            <person name="Saw J.H."/>
            <person name="Lee K.S."/>
            <person name="Freitas T.A."/>
            <person name="Belisle C."/>
            <person name="Kawarabayasi Y."/>
            <person name="Donachie S.P."/>
            <person name="Pikina A."/>
            <person name="Galperin M.Y."/>
            <person name="Koonin E.V."/>
            <person name="Makarova K.S."/>
            <person name="Omelchenko M.V."/>
            <person name="Sorokin A."/>
            <person name="Wolf Y.I."/>
            <person name="Li Q.X."/>
            <person name="Keum Y.S."/>
            <person name="Campbell S."/>
            <person name="Denery J."/>
            <person name="Aizawa S."/>
            <person name="Shibata S."/>
            <person name="Malahoff A."/>
            <person name="Alam M."/>
        </authorList>
    </citation>
    <scope>NUCLEOTIDE SEQUENCE [LARGE SCALE GENOMIC DNA]</scope>
    <source>
        <strain>ATCC BAA-735 / DSM 15497 / L2-TR</strain>
    </source>
</reference>
<keyword id="KW-1185">Reference proteome</keyword>
<keyword id="KW-0687">Ribonucleoprotein</keyword>
<keyword id="KW-0689">Ribosomal protein</keyword>
<keyword id="KW-0694">RNA-binding</keyword>
<keyword id="KW-0699">rRNA-binding</keyword>
<gene>
    <name evidence="1" type="primary">rpsF</name>
    <name type="ordered locus">IL1940</name>
</gene>
<organism>
    <name type="scientific">Idiomarina loihiensis (strain ATCC BAA-735 / DSM 15497 / L2-TR)</name>
    <dbReference type="NCBI Taxonomy" id="283942"/>
    <lineage>
        <taxon>Bacteria</taxon>
        <taxon>Pseudomonadati</taxon>
        <taxon>Pseudomonadota</taxon>
        <taxon>Gammaproteobacteria</taxon>
        <taxon>Alteromonadales</taxon>
        <taxon>Idiomarinaceae</taxon>
        <taxon>Idiomarina</taxon>
    </lineage>
</organism>
<protein>
    <recommendedName>
        <fullName evidence="1">Small ribosomal subunit protein bS6</fullName>
    </recommendedName>
    <alternativeName>
        <fullName evidence="3">30S ribosomal protein S6</fullName>
    </alternativeName>
</protein>
<sequence length="116" mass="13492">MRHYEIVFMVHPDQSEQVPGMIERYSETIKQGGGQIHRLEDWGRRQLAYPINKLHKAHYVLLNIEASAEVVEELETAFRYNDAVLRNMIMRKKESITEPSPLTKPKEDRKGDSEAA</sequence>
<evidence type="ECO:0000255" key="1">
    <source>
        <dbReference type="HAMAP-Rule" id="MF_00360"/>
    </source>
</evidence>
<evidence type="ECO:0000256" key="2">
    <source>
        <dbReference type="SAM" id="MobiDB-lite"/>
    </source>
</evidence>
<evidence type="ECO:0000305" key="3"/>
<accession>Q5QY01</accession>
<proteinExistence type="inferred from homology"/>
<comment type="function">
    <text evidence="1">Binds together with bS18 to 16S ribosomal RNA.</text>
</comment>
<comment type="similarity">
    <text evidence="1">Belongs to the bacterial ribosomal protein bS6 family.</text>
</comment>
<name>RS6_IDILO</name>
<feature type="chain" id="PRO_0000176778" description="Small ribosomal subunit protein bS6">
    <location>
        <begin position="1"/>
        <end position="116"/>
    </location>
</feature>
<feature type="region of interest" description="Disordered" evidence="2">
    <location>
        <begin position="94"/>
        <end position="116"/>
    </location>
</feature>
<feature type="compositionally biased region" description="Basic and acidic residues" evidence="2">
    <location>
        <begin position="104"/>
        <end position="116"/>
    </location>
</feature>
<dbReference type="EMBL" id="AE017340">
    <property type="protein sequence ID" value="AAV82772.1"/>
    <property type="molecule type" value="Genomic_DNA"/>
</dbReference>
<dbReference type="RefSeq" id="WP_011235168.1">
    <property type="nucleotide sequence ID" value="NC_006512.1"/>
</dbReference>
<dbReference type="SMR" id="Q5QY01"/>
<dbReference type="STRING" id="283942.IL1940"/>
<dbReference type="GeneID" id="41337128"/>
<dbReference type="KEGG" id="ilo:IL1940"/>
<dbReference type="eggNOG" id="COG0360">
    <property type="taxonomic scope" value="Bacteria"/>
</dbReference>
<dbReference type="HOGENOM" id="CLU_113441_6_1_6"/>
<dbReference type="OrthoDB" id="9812702at2"/>
<dbReference type="Proteomes" id="UP000001171">
    <property type="component" value="Chromosome"/>
</dbReference>
<dbReference type="GO" id="GO:0022627">
    <property type="term" value="C:cytosolic small ribosomal subunit"/>
    <property type="evidence" value="ECO:0007669"/>
    <property type="project" value="TreeGrafter"/>
</dbReference>
<dbReference type="GO" id="GO:0070181">
    <property type="term" value="F:small ribosomal subunit rRNA binding"/>
    <property type="evidence" value="ECO:0007669"/>
    <property type="project" value="TreeGrafter"/>
</dbReference>
<dbReference type="GO" id="GO:0003735">
    <property type="term" value="F:structural constituent of ribosome"/>
    <property type="evidence" value="ECO:0007669"/>
    <property type="project" value="InterPro"/>
</dbReference>
<dbReference type="GO" id="GO:0006412">
    <property type="term" value="P:translation"/>
    <property type="evidence" value="ECO:0007669"/>
    <property type="project" value="UniProtKB-UniRule"/>
</dbReference>
<dbReference type="CDD" id="cd00473">
    <property type="entry name" value="bS6"/>
    <property type="match status" value="1"/>
</dbReference>
<dbReference type="FunFam" id="3.30.70.60:FF:000003">
    <property type="entry name" value="30S ribosomal protein S6"/>
    <property type="match status" value="1"/>
</dbReference>
<dbReference type="Gene3D" id="3.30.70.60">
    <property type="match status" value="1"/>
</dbReference>
<dbReference type="HAMAP" id="MF_00360">
    <property type="entry name" value="Ribosomal_bS6"/>
    <property type="match status" value="1"/>
</dbReference>
<dbReference type="InterPro" id="IPR000529">
    <property type="entry name" value="Ribosomal_bS6"/>
</dbReference>
<dbReference type="InterPro" id="IPR020815">
    <property type="entry name" value="Ribosomal_bS6_CS"/>
</dbReference>
<dbReference type="InterPro" id="IPR035980">
    <property type="entry name" value="Ribosomal_bS6_sf"/>
</dbReference>
<dbReference type="InterPro" id="IPR020814">
    <property type="entry name" value="Ribosomal_S6_plastid/chlpt"/>
</dbReference>
<dbReference type="InterPro" id="IPR014717">
    <property type="entry name" value="Transl_elong_EF1B/ribsomal_bS6"/>
</dbReference>
<dbReference type="NCBIfam" id="TIGR00166">
    <property type="entry name" value="S6"/>
    <property type="match status" value="1"/>
</dbReference>
<dbReference type="PANTHER" id="PTHR21011">
    <property type="entry name" value="MITOCHONDRIAL 28S RIBOSOMAL PROTEIN S6"/>
    <property type="match status" value="1"/>
</dbReference>
<dbReference type="PANTHER" id="PTHR21011:SF1">
    <property type="entry name" value="SMALL RIBOSOMAL SUBUNIT PROTEIN BS6M"/>
    <property type="match status" value="1"/>
</dbReference>
<dbReference type="Pfam" id="PF01250">
    <property type="entry name" value="Ribosomal_S6"/>
    <property type="match status" value="1"/>
</dbReference>
<dbReference type="SUPFAM" id="SSF54995">
    <property type="entry name" value="Ribosomal protein S6"/>
    <property type="match status" value="1"/>
</dbReference>
<dbReference type="PROSITE" id="PS01048">
    <property type="entry name" value="RIBOSOMAL_S6"/>
    <property type="match status" value="1"/>
</dbReference>